<organism>
    <name type="scientific">Pan troglodytes</name>
    <name type="common">Chimpanzee</name>
    <dbReference type="NCBI Taxonomy" id="9598"/>
    <lineage>
        <taxon>Eukaryota</taxon>
        <taxon>Metazoa</taxon>
        <taxon>Chordata</taxon>
        <taxon>Craniata</taxon>
        <taxon>Vertebrata</taxon>
        <taxon>Euteleostomi</taxon>
        <taxon>Mammalia</taxon>
        <taxon>Eutheria</taxon>
        <taxon>Euarchontoglires</taxon>
        <taxon>Primates</taxon>
        <taxon>Haplorrhini</taxon>
        <taxon>Catarrhini</taxon>
        <taxon>Hominidae</taxon>
        <taxon>Pan</taxon>
    </lineage>
</organism>
<sequence>MGSGPIDPKELLKGLDSFLNRDGEVKSVDGISKIFSLMKEARKMVSRCTYLNILLQTRSPEILVKFIDVGGYKLLNNWLTYSKTTNNIPLLQQILLTLQHLPLTVDHLKQNNTAKLVKQLSKSSEDEELRKLASVLVSDWMAVIRSQSSTQPAEKDKKKRKDEGKSRTTLPERPLTEVKAETRAEEAPEKKREKPKSLRTTAPSHAKFRSTGLELETPSLVPVKKNASTVVVSDKYNLKPIPLKRQSNVAAPGDATPPAEKKYKPLNTTPNATKEIKVKIIPPQPMEGLGFLDALNSAPVPGIKIKKKKKVLSPTAAKPSPFEGKTSTEPSTAKPSSPEPAPPSEAMEADRPGTPVPPVEVPELMDTASLEPGALDAKPVESPGDPNQLTRKGRKRKSVTWPEEGKLREYFYFELDETERVNVNKIKDFGEAAKREILSDRHAFETARRLSHDNMEEKVPWVCPRPLVLPSPLVTPGSNSQERYIQAEREKGILQELFLNKESPHEPDPEPYEPIPPKLIPLDEECSMDETPYVETLEPGGSGGSPDGAGGSKLPPVLANLMGSMGAGKGPQGPGAGGINVQEILTSIMGSPNSHPSEELLKQPDYSDKIKQMLVPHGLLGPGPIANGFPPGGPGGPKGMQHFPPGPGGPMPGPHGGPGGPVGPRLLGPPPPPRGGDPFWDGPGDPMRGGPMRGGPGPGPGPYHRGRGGRGGNEPPPPPPPFRGARGGRSGGGPPNGRGGPGGGMVGGGGHRPHEGPGGGMGNNSGHRPHEGPGGGMGSGHRPHEGPAGSMGGGGGHRPHEGPGGGISGGSGHRPHEGPGGGMGAGGGHRPHEGPGGSMGGSGGHRPHEGPGHGGPHGHRPHDVPGHRGHDHRGPPPHEHRGHDGPGHGGGGHRGHDGGHSHGGDMSNRPVCRHFMMKGNCRYENNCAFYHPGVNGPPLP</sequence>
<dbReference type="EMBL" id="BA000041">
    <property type="protein sequence ID" value="BAC78178.1"/>
    <property type="molecule type" value="Genomic_DNA"/>
</dbReference>
<dbReference type="EMBL" id="AB210175">
    <property type="protein sequence ID" value="BAE92788.1"/>
    <property type="molecule type" value="Genomic_DNA"/>
</dbReference>
<dbReference type="EMBL" id="AB210176">
    <property type="protein sequence ID" value="BAE92790.1"/>
    <property type="molecule type" value="Genomic_DNA"/>
</dbReference>
<dbReference type="RefSeq" id="NP_001038965.1">
    <property type="nucleotide sequence ID" value="NM_001045500.1"/>
</dbReference>
<dbReference type="RefSeq" id="XP_009449100.1">
    <property type="nucleotide sequence ID" value="XM_009450825.5"/>
</dbReference>
<dbReference type="RefSeq" id="XP_054541437.1">
    <property type="nucleotide sequence ID" value="XM_054685462.2"/>
</dbReference>
<dbReference type="BMRB" id="Q7YR38"/>
<dbReference type="SMR" id="Q7YR38"/>
<dbReference type="FunCoup" id="Q7YR38">
    <property type="interactions" value="3074"/>
</dbReference>
<dbReference type="STRING" id="9598.ENSPTRP00000030588"/>
<dbReference type="PaxDb" id="9598-ENSPTRP00000030588"/>
<dbReference type="Ensembl" id="ENSPTRT00000033108.4">
    <property type="protein sequence ID" value="ENSPTRP00000030588.3"/>
    <property type="gene ID" value="ENSPTRG00000017931.6"/>
</dbReference>
<dbReference type="GeneID" id="462544"/>
<dbReference type="KEGG" id="ptr:462544"/>
<dbReference type="CTD" id="5514"/>
<dbReference type="VGNC" id="VGNC:11180">
    <property type="gene designation" value="PPP1R10"/>
</dbReference>
<dbReference type="eggNOG" id="ENOG502QQ2I">
    <property type="taxonomic scope" value="Eukaryota"/>
</dbReference>
<dbReference type="GeneTree" id="ENSGT00940000159263"/>
<dbReference type="HOGENOM" id="CLU_019410_0_0_1"/>
<dbReference type="InParanoid" id="Q7YR38"/>
<dbReference type="OMA" id="NGPPQIW"/>
<dbReference type="OrthoDB" id="17327at9604"/>
<dbReference type="TreeFam" id="TF105541"/>
<dbReference type="Proteomes" id="UP000002277">
    <property type="component" value="Chromosome 6"/>
</dbReference>
<dbReference type="Bgee" id="ENSPTRG00000017931">
    <property type="expression patterns" value="Expressed in lung and 21 other cell types or tissues"/>
</dbReference>
<dbReference type="GO" id="GO:0000785">
    <property type="term" value="C:chromatin"/>
    <property type="evidence" value="ECO:0000250"/>
    <property type="project" value="UniProtKB"/>
</dbReference>
<dbReference type="GO" id="GO:0000781">
    <property type="term" value="C:chromosome, telomeric region"/>
    <property type="evidence" value="ECO:0007669"/>
    <property type="project" value="Ensembl"/>
</dbReference>
<dbReference type="GO" id="GO:0016604">
    <property type="term" value="C:nuclear body"/>
    <property type="evidence" value="ECO:0007669"/>
    <property type="project" value="Ensembl"/>
</dbReference>
<dbReference type="GO" id="GO:0072357">
    <property type="term" value="C:PTW/PP1 phosphatase complex"/>
    <property type="evidence" value="ECO:0000250"/>
    <property type="project" value="UniProtKB"/>
</dbReference>
<dbReference type="GO" id="GO:0003677">
    <property type="term" value="F:DNA binding"/>
    <property type="evidence" value="ECO:0007669"/>
    <property type="project" value="UniProtKB-KW"/>
</dbReference>
<dbReference type="GO" id="GO:0140767">
    <property type="term" value="F:enzyme-substrate adaptor activity"/>
    <property type="evidence" value="ECO:0000250"/>
    <property type="project" value="UniProtKB"/>
</dbReference>
<dbReference type="GO" id="GO:0008157">
    <property type="term" value="F:protein phosphatase 1 binding"/>
    <property type="evidence" value="ECO:0000318"/>
    <property type="project" value="GO_Central"/>
</dbReference>
<dbReference type="GO" id="GO:0004864">
    <property type="term" value="F:protein phosphatase inhibitor activity"/>
    <property type="evidence" value="ECO:0007669"/>
    <property type="project" value="UniProtKB-KW"/>
</dbReference>
<dbReference type="GO" id="GO:0019888">
    <property type="term" value="F:protein phosphatase regulator activity"/>
    <property type="evidence" value="ECO:0000250"/>
    <property type="project" value="UniProtKB"/>
</dbReference>
<dbReference type="GO" id="GO:0003723">
    <property type="term" value="F:RNA binding"/>
    <property type="evidence" value="ECO:0007669"/>
    <property type="project" value="UniProtKB-KW"/>
</dbReference>
<dbReference type="GO" id="GO:0008270">
    <property type="term" value="F:zinc ion binding"/>
    <property type="evidence" value="ECO:0007669"/>
    <property type="project" value="UniProtKB-KW"/>
</dbReference>
<dbReference type="GO" id="GO:0010667">
    <property type="term" value="P:negative regulation of cardiac muscle cell apoptotic process"/>
    <property type="evidence" value="ECO:0007669"/>
    <property type="project" value="Ensembl"/>
</dbReference>
<dbReference type="GO" id="GO:1904290">
    <property type="term" value="P:negative regulation of mitotic DNA damage checkpoint"/>
    <property type="evidence" value="ECO:0007669"/>
    <property type="project" value="Ensembl"/>
</dbReference>
<dbReference type="GO" id="GO:0034244">
    <property type="term" value="P:negative regulation of transcription elongation by RNA polymerase II"/>
    <property type="evidence" value="ECO:0000250"/>
    <property type="project" value="UniProtKB"/>
</dbReference>
<dbReference type="GO" id="GO:0032206">
    <property type="term" value="P:positive regulation of telomere maintenance"/>
    <property type="evidence" value="ECO:0007669"/>
    <property type="project" value="Ensembl"/>
</dbReference>
<dbReference type="GO" id="GO:2000806">
    <property type="term" value="P:positive regulation of termination of RNA polymerase II transcription, poly(A)-coupled"/>
    <property type="evidence" value="ECO:0000250"/>
    <property type="project" value="UniProtKB"/>
</dbReference>
<dbReference type="GO" id="GO:0032968">
    <property type="term" value="P:positive regulation of transcription elongation by RNA polymerase II"/>
    <property type="evidence" value="ECO:0000250"/>
    <property type="project" value="UniProtKB"/>
</dbReference>
<dbReference type="GO" id="GO:0050821">
    <property type="term" value="P:protein stabilization"/>
    <property type="evidence" value="ECO:0007669"/>
    <property type="project" value="Ensembl"/>
</dbReference>
<dbReference type="GO" id="GO:0001111">
    <property type="term" value="P:RNA polymerase II promoter clearance"/>
    <property type="evidence" value="ECO:0000250"/>
    <property type="project" value="UniProtKB"/>
</dbReference>
<dbReference type="CDD" id="cd00183">
    <property type="entry name" value="TFIIS_I"/>
    <property type="match status" value="1"/>
</dbReference>
<dbReference type="FunFam" id="1.20.930.10:FF:000006">
    <property type="entry name" value="Serine/threonine-protein phosphatase 1 regulatory subunit 10"/>
    <property type="match status" value="1"/>
</dbReference>
<dbReference type="Gene3D" id="1.20.930.10">
    <property type="entry name" value="Conserved domain common to transcription factors TFIIS, elongin A, CRSP70"/>
    <property type="match status" value="1"/>
</dbReference>
<dbReference type="InterPro" id="IPR003617">
    <property type="entry name" value="TFIIS/CRSP70_N_sub"/>
</dbReference>
<dbReference type="InterPro" id="IPR035441">
    <property type="entry name" value="TFIIS/LEDGF_dom_sf"/>
</dbReference>
<dbReference type="InterPro" id="IPR017923">
    <property type="entry name" value="TFIIS_N"/>
</dbReference>
<dbReference type="InterPro" id="IPR000571">
    <property type="entry name" value="Znf_CCCH"/>
</dbReference>
<dbReference type="InterPro" id="IPR036855">
    <property type="entry name" value="Znf_CCCH_sf"/>
</dbReference>
<dbReference type="PANTHER" id="PTHR46557">
    <property type="entry name" value="SERINE/THREONINE-PROTEIN PHOSPHATASE 1 REGULATORY SUBUNIT 10-RELATED"/>
    <property type="match status" value="1"/>
</dbReference>
<dbReference type="PANTHER" id="PTHR46557:SF1">
    <property type="entry name" value="SERINE_THREONINE-PROTEIN PHOSPHATASE 1 REGULATORY SUBUNIT 10"/>
    <property type="match status" value="1"/>
</dbReference>
<dbReference type="Pfam" id="PF08711">
    <property type="entry name" value="Med26"/>
    <property type="match status" value="1"/>
</dbReference>
<dbReference type="Pfam" id="PF00642">
    <property type="entry name" value="zf-CCCH"/>
    <property type="match status" value="1"/>
</dbReference>
<dbReference type="SMART" id="SM00509">
    <property type="entry name" value="TFS2N"/>
    <property type="match status" value="1"/>
</dbReference>
<dbReference type="SMART" id="SM00356">
    <property type="entry name" value="ZnF_C3H1"/>
    <property type="match status" value="1"/>
</dbReference>
<dbReference type="SUPFAM" id="SSF90229">
    <property type="entry name" value="CCCH zinc finger"/>
    <property type="match status" value="1"/>
</dbReference>
<dbReference type="SUPFAM" id="SSF47676">
    <property type="entry name" value="Conserved domain common to transcription factors TFIIS, elongin A, CRSP70"/>
    <property type="match status" value="1"/>
</dbReference>
<dbReference type="PROSITE" id="PS51319">
    <property type="entry name" value="TFIIS_N"/>
    <property type="match status" value="1"/>
</dbReference>
<dbReference type="PROSITE" id="PS50103">
    <property type="entry name" value="ZF_C3H1"/>
    <property type="match status" value="1"/>
</dbReference>
<name>PP1RA_PANTR</name>
<comment type="function">
    <text evidence="2 3">Substrate-recognition component of the PNUTS-PP1 protein phosphatase complex, a protein phosphatase 1 (PP1) complex that promotes RNA polymerase II transcription pause-release, allowing transcription elongation. Promoter-proximal pausing by RNA polymerase II is a transcription halt following transcription initiation but prior to elongation, which acts as a checkpoint to control that transcripts are favorably configured for transcriptional elongation. The PNUTS-PP1 complex mediates the release of RNA polymerase II from promoter-proximal region of genes by catalyzing dephosphorylation of proteins involved in transcription, such as AFF4, CDK9, MEPCE, INTS12, NCBP1, POLR2M/GDOWN1 and SUPT6H. The PNUTS-PP1 complex also regulates RNA polymerase II transcription termination by mediating dephosphorylation of SUPT5H in termination zones downstream of poly(A) sites, thereby promoting deceleration of RNA polymerase II transcription. PNUTS-PP1 complex is also involved in the response to replication stress by mediating dephosphorylation of POLR2A at 'Ser-5' of the CTD, promoting RNA polymerase II degradation (By similarity). The PNUTS-PP1 complex also plays a role in the control of chromatin structure and cell cycle progression during the transition from mitosis into interphase (By similarity). PNUTS-PP1 complex mediates dephosphorylation of MYC, promoting MYC stability by preventing MYC ubiquitination by the SCF(FBXW7) complex. In addition to acts as a substrate-recognition component, PPP1R10/PNUTS also acts as a nuclear targeting subunit for the PNUTS-PP1 complex. In some context, PPP1R10/PNUTS also acts as an inhibitor of protein phosphatase 1 (PP1) activity by preventing access to substrates, such as RB (By similarity).</text>
</comment>
<comment type="subunit">
    <text evidence="3">Component of the PNUTS-PP1 complex (also named PTW/PP1 complex), composed of PPP1R10/PNUTS, TOX4, WDR82, and PPP1CA (or PPP1CB or PPP1CC).</text>
</comment>
<comment type="subcellular location">
    <subcellularLocation>
        <location evidence="3 4">Nucleus</location>
    </subcellularLocation>
    <subcellularLocation>
        <location evidence="3">Chromosome</location>
    </subcellularLocation>
    <text evidence="2 3">Found in discrete nucleoplasmic bodies and within nucleoli. Associates with RNA polymerase II (Pol II) on chromatin during pause-release checkpoint (By similarity). Associates with chromatin during interphase, excluded from condensed chromosomes during early mitosis and is reloaded onto chromosomes at the late telophase (By similarity).</text>
</comment>
<comment type="domain">
    <text evidence="3">The TFIIS N-terminal domain specifically recognizes disordered sequences in protein substrates that are then dephosphorylated by PPP1CA (or PPP1CB or PPP1CC).</text>
</comment>
<comment type="PTM">
    <text evidence="1">Phosphorylated on Ser-398 by PKA within the region necessary for interaction with PPP1CA.</text>
</comment>
<proteinExistence type="inferred from homology"/>
<reference key="1">
    <citation type="journal article" date="2003" name="Proc. Natl. Acad. Sci. U.S.A.">
        <title>Comparative sequencing of human and chimpanzee MHC class I regions unveils insertions/deletions as the major path to genomic divergence.</title>
        <authorList>
            <person name="Anzai T."/>
            <person name="Shiina T."/>
            <person name="Kimura N."/>
            <person name="Yanagiya K."/>
            <person name="Kohara S."/>
            <person name="Shigenari A."/>
            <person name="Yamagata T."/>
            <person name="Kulski J.K."/>
            <person name="Naruse T.K."/>
            <person name="Fujimori Y."/>
            <person name="Fukuzumi Y."/>
            <person name="Yamazaki M."/>
            <person name="Tashiro H."/>
            <person name="Iwamoto C."/>
            <person name="Umehara Y."/>
            <person name="Imanishi T."/>
            <person name="Meyer A."/>
            <person name="Ikeo K."/>
            <person name="Gojobori T."/>
            <person name="Bahram S."/>
            <person name="Inoko H."/>
        </authorList>
    </citation>
    <scope>NUCLEOTIDE SEQUENCE [LARGE SCALE GENOMIC DNA]</scope>
</reference>
<reference key="2">
    <citation type="journal article" date="2006" name="Genetics">
        <title>Rapid evolution of major histocompatibility complex class I genes in primates generates new disease alleles in humans via hitchhiking diversity.</title>
        <authorList>
            <person name="Shiina T."/>
            <person name="Ota M."/>
            <person name="Shimizu S."/>
            <person name="Katsuyama Y."/>
            <person name="Hashimoto N."/>
            <person name="Takasu M."/>
            <person name="Anzai T."/>
            <person name="Kulski J.K."/>
            <person name="Kikkawa E."/>
            <person name="Naruse T."/>
            <person name="Kimura N."/>
            <person name="Yanagiya K."/>
            <person name="Watanabe A."/>
            <person name="Hosomichi K."/>
            <person name="Kohara S."/>
            <person name="Iwamoto C."/>
            <person name="Umehara Y."/>
            <person name="Meyer A."/>
            <person name="Wanner V."/>
            <person name="Sano K."/>
            <person name="Macquin C."/>
            <person name="Ikeo K."/>
            <person name="Tokunaga K."/>
            <person name="Gojobori T."/>
            <person name="Inoko H."/>
            <person name="Bahram S."/>
        </authorList>
    </citation>
    <scope>NUCLEOTIDE SEQUENCE [LARGE SCALE GENOMIC DNA]</scope>
</reference>
<gene>
    <name type="primary">PPP1R10</name>
    <name type="synonym">CAT53</name>
    <name type="synonym">FB19</name>
</gene>
<evidence type="ECO:0000250" key="1">
    <source>
        <dbReference type="UniProtKB" id="O55000"/>
    </source>
</evidence>
<evidence type="ECO:0000250" key="2">
    <source>
        <dbReference type="UniProtKB" id="Q80W00"/>
    </source>
</evidence>
<evidence type="ECO:0000250" key="3">
    <source>
        <dbReference type="UniProtKB" id="Q96QC0"/>
    </source>
</evidence>
<evidence type="ECO:0000255" key="4">
    <source>
        <dbReference type="PROSITE-ProRule" id="PRU00649"/>
    </source>
</evidence>
<evidence type="ECO:0000255" key="5">
    <source>
        <dbReference type="PROSITE-ProRule" id="PRU00723"/>
    </source>
</evidence>
<evidence type="ECO:0000256" key="6">
    <source>
        <dbReference type="SAM" id="MobiDB-lite"/>
    </source>
</evidence>
<keyword id="KW-0158">Chromosome</keyword>
<keyword id="KW-0238">DNA-binding</keyword>
<keyword id="KW-1017">Isopeptide bond</keyword>
<keyword id="KW-0479">Metal-binding</keyword>
<keyword id="KW-0488">Methylation</keyword>
<keyword id="KW-0539">Nucleus</keyword>
<keyword id="KW-0597">Phosphoprotein</keyword>
<keyword id="KW-1185">Reference proteome</keyword>
<keyword id="KW-0694">RNA-binding</keyword>
<keyword id="KW-0832">Ubl conjugation</keyword>
<keyword id="KW-0862">Zinc</keyword>
<keyword id="KW-0863">Zinc-finger</keyword>
<feature type="chain" id="PRO_0000071513" description="Serine/threonine-protein phosphatase 1 regulatory subunit 10">
    <location>
        <begin position="1"/>
        <end position="940"/>
    </location>
</feature>
<feature type="domain" description="TFIIS N-terminal" evidence="4">
    <location>
        <begin position="73"/>
        <end position="147"/>
    </location>
</feature>
<feature type="zinc finger region" description="C3H1-type" evidence="5">
    <location>
        <begin position="906"/>
        <end position="934"/>
    </location>
</feature>
<feature type="region of interest" description="Interaction with TOX4" evidence="2">
    <location>
        <begin position="1"/>
        <end position="348"/>
    </location>
</feature>
<feature type="region of interest" description="Disordered" evidence="6">
    <location>
        <begin position="147"/>
        <end position="210"/>
    </location>
</feature>
<feature type="region of interest" description="Disordered" evidence="6">
    <location>
        <begin position="248"/>
        <end position="270"/>
    </location>
</feature>
<feature type="region of interest" description="Disordered" evidence="6">
    <location>
        <begin position="304"/>
        <end position="400"/>
    </location>
</feature>
<feature type="region of interest" description="Necessary for interaction with PPP1CA" evidence="1">
    <location>
        <begin position="357"/>
        <end position="433"/>
    </location>
</feature>
<feature type="region of interest" description="Necessary for interaction with PPP1CC" evidence="3">
    <location>
        <begin position="393"/>
        <end position="408"/>
    </location>
</feature>
<feature type="region of interest" description="Interaction with WDR82" evidence="2">
    <location>
        <begin position="418"/>
        <end position="619"/>
    </location>
</feature>
<feature type="region of interest" description="Disordered" evidence="6">
    <location>
        <begin position="534"/>
        <end position="557"/>
    </location>
</feature>
<feature type="region of interest" description="Disordered" evidence="6">
    <location>
        <begin position="617"/>
        <end position="905"/>
    </location>
</feature>
<feature type="short sequence motif" description="PP1-binding motif" evidence="1">
    <location>
        <begin position="394"/>
        <end position="423"/>
    </location>
</feature>
<feature type="compositionally biased region" description="Basic and acidic residues" evidence="6">
    <location>
        <begin position="153"/>
        <end position="166"/>
    </location>
</feature>
<feature type="compositionally biased region" description="Basic and acidic residues" evidence="6">
    <location>
        <begin position="174"/>
        <end position="196"/>
    </location>
</feature>
<feature type="compositionally biased region" description="Low complexity" evidence="6">
    <location>
        <begin position="325"/>
        <end position="336"/>
    </location>
</feature>
<feature type="compositionally biased region" description="Gly residues" evidence="6">
    <location>
        <begin position="540"/>
        <end position="551"/>
    </location>
</feature>
<feature type="compositionally biased region" description="Pro residues" evidence="6">
    <location>
        <begin position="644"/>
        <end position="655"/>
    </location>
</feature>
<feature type="compositionally biased region" description="Low complexity" evidence="6">
    <location>
        <begin position="676"/>
        <end position="690"/>
    </location>
</feature>
<feature type="compositionally biased region" description="Gly residues" evidence="6">
    <location>
        <begin position="725"/>
        <end position="763"/>
    </location>
</feature>
<feature type="compositionally biased region" description="Gly residues" evidence="6">
    <location>
        <begin position="789"/>
        <end position="844"/>
    </location>
</feature>
<feature type="compositionally biased region" description="Basic and acidic residues" evidence="6">
    <location>
        <begin position="861"/>
        <end position="886"/>
    </location>
</feature>
<feature type="compositionally biased region" description="Basic and acidic residues" evidence="6">
    <location>
        <begin position="894"/>
        <end position="903"/>
    </location>
</feature>
<feature type="modified residue" description="Phosphothreonine" evidence="3">
    <location>
        <position position="256"/>
    </location>
</feature>
<feature type="modified residue" description="Phosphoserine" evidence="3">
    <location>
        <position position="313"/>
    </location>
</feature>
<feature type="modified residue" description="Phosphoserine" evidence="3">
    <location>
        <position position="382"/>
    </location>
</feature>
<feature type="modified residue" description="Phosphoserine; by PKA" evidence="3">
    <location>
        <position position="398"/>
    </location>
</feature>
<feature type="modified residue" description="Phosphoserine" evidence="3">
    <location>
        <position position="545"/>
    </location>
</feature>
<feature type="modified residue" description="Phosphoserine" evidence="3">
    <location>
        <position position="591"/>
    </location>
</feature>
<feature type="modified residue" description="Omega-N-methylarginine" evidence="3">
    <location>
        <position position="665"/>
    </location>
</feature>
<feature type="modified residue" description="Omega-N-methylarginine" evidence="3">
    <location>
        <position position="693"/>
    </location>
</feature>
<feature type="modified residue" description="Omega-N-methylarginine" evidence="2">
    <location>
        <position position="738"/>
    </location>
</feature>
<feature type="cross-link" description="Glycyl lysine isopeptide (Lys-Gly) (interchain with G-Cter in SUMO2)" evidence="3">
    <location>
        <position position="179"/>
    </location>
</feature>
<feature type="cross-link" description="Glycyl lysine isopeptide (Lys-Gly) (interchain with G-Cter in SUMO2)" evidence="3">
    <location>
        <position position="262"/>
    </location>
</feature>
<protein>
    <recommendedName>
        <fullName>Serine/threonine-protein phosphatase 1 regulatory subunit 10</fullName>
    </recommendedName>
    <alternativeName>
        <fullName>MHC class I region proline-rich protein CAT53</fullName>
    </alternativeName>
    <alternativeName>
        <fullName>Protein FB19</fullName>
    </alternativeName>
</protein>
<accession>Q7YR38</accession>
<accession>Q1XHY0</accession>